<reference key="1">
    <citation type="journal article" date="2008" name="Infect. Immun.">
        <title>Genomic comparison of virulent Rickettsia rickettsii Sheila Smith and avirulent Rickettsia rickettsii Iowa.</title>
        <authorList>
            <person name="Ellison D.W."/>
            <person name="Clark T.R."/>
            <person name="Sturdevant D.E."/>
            <person name="Virtaneva K."/>
            <person name="Porcella S.F."/>
            <person name="Hackstadt T."/>
        </authorList>
    </citation>
    <scope>NUCLEOTIDE SEQUENCE [LARGE SCALE GENOMIC DNA]</scope>
    <source>
        <strain>Iowa</strain>
    </source>
</reference>
<organism>
    <name type="scientific">Rickettsia rickettsii (strain Iowa)</name>
    <dbReference type="NCBI Taxonomy" id="452659"/>
    <lineage>
        <taxon>Bacteria</taxon>
        <taxon>Pseudomonadati</taxon>
        <taxon>Pseudomonadota</taxon>
        <taxon>Alphaproteobacteria</taxon>
        <taxon>Rickettsiales</taxon>
        <taxon>Rickettsiaceae</taxon>
        <taxon>Rickettsieae</taxon>
        <taxon>Rickettsia</taxon>
        <taxon>spotted fever group</taxon>
    </lineage>
</organism>
<comment type="function">
    <text evidence="1">Involved in transcription antitermination. Required for transcription of ribosomal RNA (rRNA) genes. Binds specifically to the boxA antiterminator sequence of the ribosomal RNA (rrn) operons.</text>
</comment>
<comment type="similarity">
    <text evidence="1">Belongs to the NusB family.</text>
</comment>
<evidence type="ECO:0000255" key="1">
    <source>
        <dbReference type="HAMAP-Rule" id="MF_00073"/>
    </source>
</evidence>
<sequence>MSSNKINKKSIARIAAVQAIYQNILQNNDDMDDIMQNVLSFYQNNNSITDLPENLKISLSISHFKMLVKLVFENIHKLDEIIDNHLTNDKDPAHMPILLRALLRVSICELLFCPTTPAKVVINEYTDIANDMLNEHEIGFVNSVLDKIAKEHTRLI</sequence>
<proteinExistence type="inferred from homology"/>
<dbReference type="EMBL" id="CP000766">
    <property type="protein sequence ID" value="ABY72163.1"/>
    <property type="molecule type" value="Genomic_DNA"/>
</dbReference>
<dbReference type="RefSeq" id="WP_012150420.1">
    <property type="nucleotide sequence ID" value="NC_010263.3"/>
</dbReference>
<dbReference type="SMR" id="B0BWD7"/>
<dbReference type="GeneID" id="79936998"/>
<dbReference type="KEGG" id="rrj:RrIowa_0252"/>
<dbReference type="eggNOG" id="COG0781">
    <property type="taxonomic scope" value="Bacteria"/>
</dbReference>
<dbReference type="HOGENOM" id="CLU_087843_4_3_5"/>
<dbReference type="Proteomes" id="UP000000796">
    <property type="component" value="Chromosome"/>
</dbReference>
<dbReference type="GO" id="GO:0005829">
    <property type="term" value="C:cytosol"/>
    <property type="evidence" value="ECO:0007669"/>
    <property type="project" value="TreeGrafter"/>
</dbReference>
<dbReference type="GO" id="GO:0003723">
    <property type="term" value="F:RNA binding"/>
    <property type="evidence" value="ECO:0007669"/>
    <property type="project" value="UniProtKB-UniRule"/>
</dbReference>
<dbReference type="GO" id="GO:0006353">
    <property type="term" value="P:DNA-templated transcription termination"/>
    <property type="evidence" value="ECO:0007669"/>
    <property type="project" value="UniProtKB-UniRule"/>
</dbReference>
<dbReference type="GO" id="GO:0031564">
    <property type="term" value="P:transcription antitermination"/>
    <property type="evidence" value="ECO:0007669"/>
    <property type="project" value="UniProtKB-KW"/>
</dbReference>
<dbReference type="Gene3D" id="1.10.940.10">
    <property type="entry name" value="NusB-like"/>
    <property type="match status" value="1"/>
</dbReference>
<dbReference type="HAMAP" id="MF_00073">
    <property type="entry name" value="NusB"/>
    <property type="match status" value="1"/>
</dbReference>
<dbReference type="InterPro" id="IPR035926">
    <property type="entry name" value="NusB-like_sf"/>
</dbReference>
<dbReference type="InterPro" id="IPR011605">
    <property type="entry name" value="NusB_fam"/>
</dbReference>
<dbReference type="InterPro" id="IPR006027">
    <property type="entry name" value="NusB_RsmB_TIM44"/>
</dbReference>
<dbReference type="NCBIfam" id="TIGR01951">
    <property type="entry name" value="nusB"/>
    <property type="match status" value="1"/>
</dbReference>
<dbReference type="PANTHER" id="PTHR11078:SF3">
    <property type="entry name" value="ANTITERMINATION NUSB DOMAIN-CONTAINING PROTEIN"/>
    <property type="match status" value="1"/>
</dbReference>
<dbReference type="PANTHER" id="PTHR11078">
    <property type="entry name" value="N UTILIZATION SUBSTANCE PROTEIN B-RELATED"/>
    <property type="match status" value="1"/>
</dbReference>
<dbReference type="Pfam" id="PF01029">
    <property type="entry name" value="NusB"/>
    <property type="match status" value="1"/>
</dbReference>
<dbReference type="SUPFAM" id="SSF48013">
    <property type="entry name" value="NusB-like"/>
    <property type="match status" value="1"/>
</dbReference>
<accession>B0BWD7</accession>
<gene>
    <name evidence="1" type="primary">nusB</name>
    <name type="ordered locus">RrIowa_0252</name>
</gene>
<feature type="chain" id="PRO_1000075197" description="Transcription antitermination protein NusB">
    <location>
        <begin position="1"/>
        <end position="156"/>
    </location>
</feature>
<keyword id="KW-0694">RNA-binding</keyword>
<keyword id="KW-0804">Transcription</keyword>
<keyword id="KW-0889">Transcription antitermination</keyword>
<keyword id="KW-0805">Transcription regulation</keyword>
<protein>
    <recommendedName>
        <fullName evidence="1">Transcription antitermination protein NusB</fullName>
    </recommendedName>
    <alternativeName>
        <fullName evidence="1">Antitermination factor NusB</fullName>
    </alternativeName>
</protein>
<name>NUSB_RICRO</name>